<name>ENPP1_RAT</name>
<sequence>MERDGEQAGQGPRHGPAGNGRELESPAAASLLAPMDLGEEPLEKAERARTAKDPNTYKVLSLVLSVCVLTTILGCIFGLKPSCAKEVKSCKGRCFERTFSNCRCDAACVSLGNCCLDFQETCVEPTHIWTCNKFRCGEKRLSRFVCSCADDCKAHNDCCINYSSVCQEKKSWVEEACETIDAPQCPAEFESPPTLLFSLDGFRAEYLHTWGGLLPVISKLKNCGTYTKNMRPVYPTKTFPNHYSIVTGLYPESHGIIDNKMYDPKMNASFSLKSKEKFNPLWYKGQPIWVTANHQEVRSGTYFWPGSDVEIDGILPDIYKVYNGSVPFEERILAVLEWLQLPSYERPHFYTLYLEEPDSSGHSHGPVSSEVIKALQKVDHIVGMLMDGLKDLGLDKCLNLILISDHGMEQGSCKKYVYLNKYLGDVNNVKVVYGPAARLRPTEVPETYYSFNYEALAKNLSCRETNQHFRPYLKHFLPKRLHFAKNDRIEPLTFYLDPQWQLALNPSERKYCGSGFHGSDNLFSNMQALFIGYGPAFKHGAEVDSFENIEVYNLMCDLLGLIPAPNNESHGSLNHLLKKPIYTPSHPKEESFLSQCPIKSVSSDLGCTCDPSIVPIMDFEKQFNLTTDAVEDVYSMTVPNGRPRNLQKQHRVCLLHQQQFLTGYSLDLLMPLWTSYTFLSNDQFSTDDFSNCLYQDLRIPLSPMHKCSYYKSTSKLSYGFLTPPRLNRVSRQIYSEALLTSNIVPMYQSFQVIWQYLHDTVLRRYAQERNGVNVVSGPVFDFDYDGRYDSSEILKQNTRVIRSQENLIPTHFFIVLTSCKQLSESPLKCTALESSAFLLPHRPDNIESCTHGKQESAWVEELLALHRARVTDVELITGLSFYQDRQESVSELLRLKTHLPIFSQED</sequence>
<dbReference type="EC" id="3.1.4.1" evidence="1"/>
<dbReference type="EC" id="3.6.1.9" evidence="1"/>
<dbReference type="EMBL" id="AF340185">
    <property type="protein sequence ID" value="AAK69653.1"/>
    <property type="molecule type" value="mRNA"/>
</dbReference>
<dbReference type="EMBL" id="AF340186">
    <property type="protein sequence ID" value="AAK69654.1"/>
    <property type="molecule type" value="mRNA"/>
</dbReference>
<dbReference type="EMBL" id="AF320054">
    <property type="protein sequence ID" value="AAL26912.1"/>
    <property type="molecule type" value="mRNA"/>
</dbReference>
<dbReference type="RefSeq" id="NP_445987.1">
    <property type="nucleotide sequence ID" value="NM_053535.1"/>
</dbReference>
<dbReference type="SMR" id="Q924C3"/>
<dbReference type="FunCoup" id="Q924C3">
    <property type="interactions" value="292"/>
</dbReference>
<dbReference type="IntAct" id="Q924C3">
    <property type="interactions" value="6"/>
</dbReference>
<dbReference type="STRING" id="10116.ENSRNOP00000019519"/>
<dbReference type="ChEMBL" id="CHEMBL4295913"/>
<dbReference type="GlyCosmos" id="Q924C3">
    <property type="glycosylation" value="6 sites, No reported glycans"/>
</dbReference>
<dbReference type="GlyGen" id="Q924C3">
    <property type="glycosylation" value="6 sites"/>
</dbReference>
<dbReference type="iPTMnet" id="Q924C3"/>
<dbReference type="PhosphoSitePlus" id="Q924C3"/>
<dbReference type="PaxDb" id="10116-ENSRNOP00000019519"/>
<dbReference type="GeneID" id="85496"/>
<dbReference type="KEGG" id="rno:85496"/>
<dbReference type="AGR" id="RGD:628825"/>
<dbReference type="CTD" id="5167"/>
<dbReference type="RGD" id="628825">
    <property type="gene designation" value="Enpp1"/>
</dbReference>
<dbReference type="eggNOG" id="KOG2645">
    <property type="taxonomic scope" value="Eukaryota"/>
</dbReference>
<dbReference type="InParanoid" id="Q924C3"/>
<dbReference type="PhylomeDB" id="Q924C3"/>
<dbReference type="BRENDA" id="3.1.4.1">
    <property type="organism ID" value="5301"/>
</dbReference>
<dbReference type="BRENDA" id="3.6.1.9">
    <property type="organism ID" value="5301"/>
</dbReference>
<dbReference type="Reactome" id="R-RNO-196843">
    <property type="pathway name" value="Vitamin B2 (riboflavin) metabolism"/>
</dbReference>
<dbReference type="SABIO-RK" id="Q924C3"/>
<dbReference type="PRO" id="PR:Q924C3"/>
<dbReference type="Proteomes" id="UP000002494">
    <property type="component" value="Unplaced"/>
</dbReference>
<dbReference type="GO" id="GO:0097440">
    <property type="term" value="C:apical dendrite"/>
    <property type="evidence" value="ECO:0000314"/>
    <property type="project" value="RGD"/>
</dbReference>
<dbReference type="GO" id="GO:0097441">
    <property type="term" value="C:basal dendrite"/>
    <property type="evidence" value="ECO:0000314"/>
    <property type="project" value="RGD"/>
</dbReference>
<dbReference type="GO" id="GO:0016323">
    <property type="term" value="C:basolateral plasma membrane"/>
    <property type="evidence" value="ECO:0007669"/>
    <property type="project" value="UniProtKB-SubCell"/>
</dbReference>
<dbReference type="GO" id="GO:0044297">
    <property type="term" value="C:cell body"/>
    <property type="evidence" value="ECO:0000314"/>
    <property type="project" value="RGD"/>
</dbReference>
<dbReference type="GO" id="GO:0042995">
    <property type="term" value="C:cell projection"/>
    <property type="evidence" value="ECO:0000314"/>
    <property type="project" value="RGD"/>
</dbReference>
<dbReference type="GO" id="GO:0009986">
    <property type="term" value="C:cell surface"/>
    <property type="evidence" value="ECO:0000266"/>
    <property type="project" value="RGD"/>
</dbReference>
<dbReference type="GO" id="GO:0005576">
    <property type="term" value="C:extracellular region"/>
    <property type="evidence" value="ECO:0000266"/>
    <property type="project" value="RGD"/>
</dbReference>
<dbReference type="GO" id="GO:0005615">
    <property type="term" value="C:extracellular space"/>
    <property type="evidence" value="ECO:0000266"/>
    <property type="project" value="RGD"/>
</dbReference>
<dbReference type="GO" id="GO:0016020">
    <property type="term" value="C:membrane"/>
    <property type="evidence" value="ECO:0000250"/>
    <property type="project" value="UniProtKB"/>
</dbReference>
<dbReference type="GO" id="GO:0043025">
    <property type="term" value="C:neuronal cell body"/>
    <property type="evidence" value="ECO:0000314"/>
    <property type="project" value="RGD"/>
</dbReference>
<dbReference type="GO" id="GO:0005886">
    <property type="term" value="C:plasma membrane"/>
    <property type="evidence" value="ECO:0000314"/>
    <property type="project" value="MGI"/>
</dbReference>
<dbReference type="GO" id="GO:0004115">
    <property type="term" value="F:3',5'-cyclic-AMP phosphodiesterase activity"/>
    <property type="evidence" value="ECO:0007669"/>
    <property type="project" value="RHEA"/>
</dbReference>
<dbReference type="GO" id="GO:0005524">
    <property type="term" value="F:ATP binding"/>
    <property type="evidence" value="ECO:0000266"/>
    <property type="project" value="RGD"/>
</dbReference>
<dbReference type="GO" id="GO:0047693">
    <property type="term" value="F:ATP diphosphatase activity"/>
    <property type="evidence" value="ECO:0007669"/>
    <property type="project" value="RHEA"/>
</dbReference>
<dbReference type="GO" id="GO:0005509">
    <property type="term" value="F:calcium ion binding"/>
    <property type="evidence" value="ECO:0000250"/>
    <property type="project" value="UniProtKB"/>
</dbReference>
<dbReference type="GO" id="GO:0106177">
    <property type="term" value="F:cyclic-GMP-AMP hydrolase activity"/>
    <property type="evidence" value="ECO:0000250"/>
    <property type="project" value="UniProtKB"/>
</dbReference>
<dbReference type="GO" id="GO:0004551">
    <property type="term" value="F:dinucleotide phosphatase activity"/>
    <property type="evidence" value="ECO:0000250"/>
    <property type="project" value="UniProtKB"/>
</dbReference>
<dbReference type="GO" id="GO:0004527">
    <property type="term" value="F:exonuclease activity"/>
    <property type="evidence" value="ECO:0000266"/>
    <property type="project" value="RGD"/>
</dbReference>
<dbReference type="GO" id="GO:0036219">
    <property type="term" value="F:GTP diphosphatase activity"/>
    <property type="evidence" value="ECO:0007669"/>
    <property type="project" value="RHEA"/>
</dbReference>
<dbReference type="GO" id="GO:0042802">
    <property type="term" value="F:identical protein binding"/>
    <property type="evidence" value="ECO:0000266"/>
    <property type="project" value="RGD"/>
</dbReference>
<dbReference type="GO" id="GO:0005158">
    <property type="term" value="F:insulin receptor binding"/>
    <property type="evidence" value="ECO:0000266"/>
    <property type="project" value="RGD"/>
</dbReference>
<dbReference type="GO" id="GO:0003676">
    <property type="term" value="F:nucleic acid binding"/>
    <property type="evidence" value="ECO:0007669"/>
    <property type="project" value="InterPro"/>
</dbReference>
<dbReference type="GO" id="GO:0047429">
    <property type="term" value="F:nucleoside triphosphate diphosphatase activity"/>
    <property type="evidence" value="ECO:0000250"/>
    <property type="project" value="UniProtKB"/>
</dbReference>
<dbReference type="GO" id="GO:0016791">
    <property type="term" value="F:phosphatase activity"/>
    <property type="evidence" value="ECO:0000266"/>
    <property type="project" value="RGD"/>
</dbReference>
<dbReference type="GO" id="GO:0004528">
    <property type="term" value="F:phosphodiesterase I activity"/>
    <property type="evidence" value="ECO:0000314"/>
    <property type="project" value="RGD"/>
</dbReference>
<dbReference type="GO" id="GO:0008081">
    <property type="term" value="F:phosphoric diester hydrolase activity"/>
    <property type="evidence" value="ECO:0000266"/>
    <property type="project" value="RGD"/>
</dbReference>
<dbReference type="GO" id="GO:0030247">
    <property type="term" value="F:polysaccharide binding"/>
    <property type="evidence" value="ECO:0007669"/>
    <property type="project" value="InterPro"/>
</dbReference>
<dbReference type="GO" id="GO:0042803">
    <property type="term" value="F:protein homodimerization activity"/>
    <property type="evidence" value="ECO:0000250"/>
    <property type="project" value="UniProtKB"/>
</dbReference>
<dbReference type="GO" id="GO:0016462">
    <property type="term" value="F:pyrophosphatase activity"/>
    <property type="evidence" value="ECO:0000266"/>
    <property type="project" value="RGD"/>
</dbReference>
<dbReference type="GO" id="GO:0005044">
    <property type="term" value="F:scavenger receptor activity"/>
    <property type="evidence" value="ECO:0007669"/>
    <property type="project" value="InterPro"/>
</dbReference>
<dbReference type="GO" id="GO:0036221">
    <property type="term" value="F:UTP diphosphatase activity"/>
    <property type="evidence" value="ECO:0007669"/>
    <property type="project" value="RHEA"/>
</dbReference>
<dbReference type="GO" id="GO:0008270">
    <property type="term" value="F:zinc ion binding"/>
    <property type="evidence" value="ECO:0000250"/>
    <property type="project" value="UniProtKB"/>
</dbReference>
<dbReference type="GO" id="GO:0050427">
    <property type="term" value="P:3'-phosphoadenosine 5'-phosphosulfate metabolic process"/>
    <property type="evidence" value="ECO:0000266"/>
    <property type="project" value="RGD"/>
</dbReference>
<dbReference type="GO" id="GO:0060612">
    <property type="term" value="P:adipose tissue development"/>
    <property type="evidence" value="ECO:0000266"/>
    <property type="project" value="RGD"/>
</dbReference>
<dbReference type="GO" id="GO:0008344">
    <property type="term" value="P:adult locomotory behavior"/>
    <property type="evidence" value="ECO:0000266"/>
    <property type="project" value="RGD"/>
</dbReference>
<dbReference type="GO" id="GO:0007628">
    <property type="term" value="P:adult walking behavior"/>
    <property type="evidence" value="ECO:0000266"/>
    <property type="project" value="RGD"/>
</dbReference>
<dbReference type="GO" id="GO:0035904">
    <property type="term" value="P:aorta development"/>
    <property type="evidence" value="ECO:0000266"/>
    <property type="project" value="RGD"/>
</dbReference>
<dbReference type="GO" id="GO:1902742">
    <property type="term" value="P:apoptotic process involved in development"/>
    <property type="evidence" value="ECO:0000266"/>
    <property type="project" value="RGD"/>
</dbReference>
<dbReference type="GO" id="GO:0060840">
    <property type="term" value="P:artery development"/>
    <property type="evidence" value="ECO:0000266"/>
    <property type="project" value="RGD"/>
</dbReference>
<dbReference type="GO" id="GO:0061975">
    <property type="term" value="P:articular cartilage development"/>
    <property type="evidence" value="ECO:0000266"/>
    <property type="project" value="RGD"/>
</dbReference>
<dbReference type="GO" id="GO:0046034">
    <property type="term" value="P:ATP metabolic process"/>
    <property type="evidence" value="ECO:0000250"/>
    <property type="project" value="UniProtKB"/>
</dbReference>
<dbReference type="GO" id="GO:0031103">
    <property type="term" value="P:axon regeneration"/>
    <property type="evidence" value="ECO:0000266"/>
    <property type="project" value="RGD"/>
</dbReference>
<dbReference type="GO" id="GO:0001922">
    <property type="term" value="P:B-1 B cell homeostasis"/>
    <property type="evidence" value="ECO:0000266"/>
    <property type="project" value="RGD"/>
</dbReference>
<dbReference type="GO" id="GO:0031214">
    <property type="term" value="P:biomineral tissue development"/>
    <property type="evidence" value="ECO:0000266"/>
    <property type="project" value="RGD"/>
</dbReference>
<dbReference type="GO" id="GO:0060348">
    <property type="term" value="P:bone development"/>
    <property type="evidence" value="ECO:0000266"/>
    <property type="project" value="RGD"/>
</dbReference>
<dbReference type="GO" id="GO:0098868">
    <property type="term" value="P:bone growth"/>
    <property type="evidence" value="ECO:0000266"/>
    <property type="project" value="RGD"/>
</dbReference>
<dbReference type="GO" id="GO:0030282">
    <property type="term" value="P:bone mineralization"/>
    <property type="evidence" value="ECO:0000266"/>
    <property type="project" value="RGD"/>
</dbReference>
<dbReference type="GO" id="GO:0035630">
    <property type="term" value="P:bone mineralization involved in bone maturation"/>
    <property type="evidence" value="ECO:0000266"/>
    <property type="project" value="RGD"/>
</dbReference>
<dbReference type="GO" id="GO:0046849">
    <property type="term" value="P:bone remodeling"/>
    <property type="evidence" value="ECO:0000266"/>
    <property type="project" value="RGD"/>
</dbReference>
<dbReference type="GO" id="GO:0045453">
    <property type="term" value="P:bone resorption"/>
    <property type="evidence" value="ECO:0000266"/>
    <property type="project" value="RGD"/>
</dbReference>
<dbReference type="GO" id="GO:0060346">
    <property type="term" value="P:bone trabecula formation"/>
    <property type="evidence" value="ECO:0000266"/>
    <property type="project" value="RGD"/>
</dbReference>
<dbReference type="GO" id="GO:0055074">
    <property type="term" value="P:calcium ion homeostasis"/>
    <property type="evidence" value="ECO:0000266"/>
    <property type="project" value="RGD"/>
</dbReference>
<dbReference type="GO" id="GO:0051216">
    <property type="term" value="P:cartilage development"/>
    <property type="evidence" value="ECO:0000266"/>
    <property type="project" value="RGD"/>
</dbReference>
<dbReference type="GO" id="GO:0000902">
    <property type="term" value="P:cell morphogenesis"/>
    <property type="evidence" value="ECO:0000266"/>
    <property type="project" value="RGD"/>
</dbReference>
<dbReference type="GO" id="GO:0008283">
    <property type="term" value="P:cell population proliferation"/>
    <property type="evidence" value="ECO:0000266"/>
    <property type="project" value="RGD"/>
</dbReference>
<dbReference type="GO" id="GO:0019725">
    <property type="term" value="P:cellular homeostasis"/>
    <property type="evidence" value="ECO:0000266"/>
    <property type="project" value="RGD"/>
</dbReference>
<dbReference type="GO" id="GO:0071468">
    <property type="term" value="P:cellular response to acidic pH"/>
    <property type="evidence" value="ECO:0000270"/>
    <property type="project" value="RGD"/>
</dbReference>
<dbReference type="GO" id="GO:0071320">
    <property type="term" value="P:cellular response to cAMP"/>
    <property type="evidence" value="ECO:0000270"/>
    <property type="project" value="RGD"/>
</dbReference>
<dbReference type="GO" id="GO:0032869">
    <property type="term" value="P:cellular response to insulin stimulus"/>
    <property type="evidence" value="ECO:0000266"/>
    <property type="project" value="RGD"/>
</dbReference>
<dbReference type="GO" id="GO:0071260">
    <property type="term" value="P:cellular response to mechanical stimulus"/>
    <property type="evidence" value="ECO:0000270"/>
    <property type="project" value="RGD"/>
</dbReference>
<dbReference type="GO" id="GO:1904384">
    <property type="term" value="P:cellular response to sodium phosphate"/>
    <property type="evidence" value="ECO:0000266"/>
    <property type="project" value="RGD"/>
</dbReference>
<dbReference type="GO" id="GO:0071560">
    <property type="term" value="P:cellular response to transforming growth factor beta stimulus"/>
    <property type="evidence" value="ECO:0000270"/>
    <property type="project" value="RGD"/>
</dbReference>
<dbReference type="GO" id="GO:0071529">
    <property type="term" value="P:cementum mineralization"/>
    <property type="evidence" value="ECO:0000266"/>
    <property type="project" value="RGD"/>
</dbReference>
<dbReference type="GO" id="GO:0022010">
    <property type="term" value="P:central nervous system myelination"/>
    <property type="evidence" value="ECO:0000266"/>
    <property type="project" value="RGD"/>
</dbReference>
<dbReference type="GO" id="GO:0021549">
    <property type="term" value="P:cerebellum development"/>
    <property type="evidence" value="ECO:0000270"/>
    <property type="project" value="RGD"/>
</dbReference>
<dbReference type="GO" id="GO:0021987">
    <property type="term" value="P:cerebral cortex development"/>
    <property type="evidence" value="ECO:0000270"/>
    <property type="project" value="RGD"/>
</dbReference>
<dbReference type="GO" id="GO:0038065">
    <property type="term" value="P:collagen-activated signaling pathway"/>
    <property type="evidence" value="ECO:0000266"/>
    <property type="project" value="RGD"/>
</dbReference>
<dbReference type="GO" id="GO:0046323">
    <property type="term" value="P:D-glucose import"/>
    <property type="evidence" value="ECO:0000266"/>
    <property type="project" value="RGD"/>
</dbReference>
<dbReference type="GO" id="GO:0042832">
    <property type="term" value="P:defense response to protozoan"/>
    <property type="evidence" value="ECO:0000266"/>
    <property type="project" value="RGD"/>
</dbReference>
<dbReference type="GO" id="GO:0008340">
    <property type="term" value="P:determination of adult lifespan"/>
    <property type="evidence" value="ECO:0000266"/>
    <property type="project" value="RGD"/>
</dbReference>
<dbReference type="GO" id="GO:0071344">
    <property type="term" value="P:diphosphate metabolic process"/>
    <property type="evidence" value="ECO:0000266"/>
    <property type="project" value="RGD"/>
</dbReference>
<dbReference type="GO" id="GO:0060350">
    <property type="term" value="P:endochondral bone morphogenesis"/>
    <property type="evidence" value="ECO:0000266"/>
    <property type="project" value="RGD"/>
</dbReference>
<dbReference type="GO" id="GO:0001958">
    <property type="term" value="P:endochondral ossification"/>
    <property type="evidence" value="ECO:0000266"/>
    <property type="project" value="RGD"/>
</dbReference>
<dbReference type="GO" id="GO:0051649">
    <property type="term" value="P:establishment of localization in cell"/>
    <property type="evidence" value="ECO:0000266"/>
    <property type="project" value="RGD"/>
</dbReference>
<dbReference type="GO" id="GO:0045444">
    <property type="term" value="P:fat cell differentiation"/>
    <property type="evidence" value="ECO:0000266"/>
    <property type="project" value="RGD"/>
</dbReference>
<dbReference type="GO" id="GO:0060613">
    <property type="term" value="P:fat pad development"/>
    <property type="evidence" value="ECO:0000266"/>
    <property type="project" value="RGD"/>
</dbReference>
<dbReference type="GO" id="GO:0006631">
    <property type="term" value="P:fatty acid metabolic process"/>
    <property type="evidence" value="ECO:0000266"/>
    <property type="project" value="RGD"/>
</dbReference>
<dbReference type="GO" id="GO:0008543">
    <property type="term" value="P:fibroblast growth factor receptor signaling pathway"/>
    <property type="evidence" value="ECO:0000266"/>
    <property type="project" value="RGD"/>
</dbReference>
<dbReference type="GO" id="GO:0010467">
    <property type="term" value="P:gene expression"/>
    <property type="evidence" value="ECO:0000266"/>
    <property type="project" value="RGD"/>
</dbReference>
<dbReference type="GO" id="GO:0006091">
    <property type="term" value="P:generation of precursor metabolites and energy"/>
    <property type="evidence" value="ECO:0000266"/>
    <property type="project" value="RGD"/>
</dbReference>
<dbReference type="GO" id="GO:0042593">
    <property type="term" value="P:glucose homeostasis"/>
    <property type="evidence" value="ECO:0000266"/>
    <property type="project" value="RGD"/>
</dbReference>
<dbReference type="GO" id="GO:0006096">
    <property type="term" value="P:glycolytic process"/>
    <property type="evidence" value="ECO:0000266"/>
    <property type="project" value="RGD"/>
</dbReference>
<dbReference type="GO" id="GO:0007507">
    <property type="term" value="P:heart development"/>
    <property type="evidence" value="ECO:0000266"/>
    <property type="project" value="RGD"/>
</dbReference>
<dbReference type="GO" id="GO:0097241">
    <property type="term" value="P:hematopoietic stem cell migration to bone marrow"/>
    <property type="evidence" value="ECO:0000266"/>
    <property type="project" value="RGD"/>
</dbReference>
<dbReference type="GO" id="GO:0021766">
    <property type="term" value="P:hippocampus development"/>
    <property type="evidence" value="ECO:0000270"/>
    <property type="project" value="RGD"/>
</dbReference>
<dbReference type="GO" id="GO:0042445">
    <property type="term" value="P:hormone metabolic process"/>
    <property type="evidence" value="ECO:0000266"/>
    <property type="project" value="RGD"/>
</dbReference>
<dbReference type="GO" id="GO:0002437">
    <property type="term" value="P:inflammatory response to antigenic stimulus"/>
    <property type="evidence" value="ECO:0000266"/>
    <property type="project" value="RGD"/>
</dbReference>
<dbReference type="GO" id="GO:0140928">
    <property type="term" value="P:inhibition of non-skeletal tissue mineralization"/>
    <property type="evidence" value="ECO:0000266"/>
    <property type="project" value="RGD"/>
</dbReference>
<dbReference type="GO" id="GO:0030505">
    <property type="term" value="P:inorganic diphosphate transport"/>
    <property type="evidence" value="ECO:0000266"/>
    <property type="project" value="RGD"/>
</dbReference>
<dbReference type="GO" id="GO:0030643">
    <property type="term" value="P:intracellular phosphate ion homeostasis"/>
    <property type="evidence" value="ECO:0000266"/>
    <property type="project" value="RGD"/>
</dbReference>
<dbReference type="GO" id="GO:0001822">
    <property type="term" value="P:kidney development"/>
    <property type="evidence" value="ECO:0000266"/>
    <property type="project" value="RGD"/>
</dbReference>
<dbReference type="GO" id="GO:0002269">
    <property type="term" value="P:leukocyte activation involved in inflammatory response"/>
    <property type="evidence" value="ECO:0000266"/>
    <property type="project" value="RGD"/>
</dbReference>
<dbReference type="GO" id="GO:0036076">
    <property type="term" value="P:ligamentous ossification"/>
    <property type="evidence" value="ECO:0000266"/>
    <property type="project" value="RGD"/>
</dbReference>
<dbReference type="GO" id="GO:0001889">
    <property type="term" value="P:liver development"/>
    <property type="evidence" value="ECO:0000270"/>
    <property type="project" value="RGD"/>
</dbReference>
<dbReference type="GO" id="GO:0060291">
    <property type="term" value="P:long-term synaptic potentiation"/>
    <property type="evidence" value="ECO:0000266"/>
    <property type="project" value="RGD"/>
</dbReference>
<dbReference type="GO" id="GO:0030225">
    <property type="term" value="P:macrophage differentiation"/>
    <property type="evidence" value="ECO:0000266"/>
    <property type="project" value="RGD"/>
</dbReference>
<dbReference type="GO" id="GO:0010960">
    <property type="term" value="P:magnesium ion homeostasis"/>
    <property type="evidence" value="ECO:0000266"/>
    <property type="project" value="RGD"/>
</dbReference>
<dbReference type="GO" id="GO:0030318">
    <property type="term" value="P:melanocyte differentiation"/>
    <property type="evidence" value="ECO:0000250"/>
    <property type="project" value="UniProtKB"/>
</dbReference>
<dbReference type="GO" id="GO:0014004">
    <property type="term" value="P:microglia differentiation"/>
    <property type="evidence" value="ECO:0000266"/>
    <property type="project" value="RGD"/>
</dbReference>
<dbReference type="GO" id="GO:1904124">
    <property type="term" value="P:microglial cell migration"/>
    <property type="evidence" value="ECO:0000266"/>
    <property type="project" value="RGD"/>
</dbReference>
<dbReference type="GO" id="GO:0042474">
    <property type="term" value="P:middle ear morphogenesis"/>
    <property type="evidence" value="ECO:0000266"/>
    <property type="project" value="RGD"/>
</dbReference>
<dbReference type="GO" id="GO:0007005">
    <property type="term" value="P:mitochondrion organization"/>
    <property type="evidence" value="ECO:0000266"/>
    <property type="project" value="RGD"/>
</dbReference>
<dbReference type="GO" id="GO:0002009">
    <property type="term" value="P:morphogenesis of an epithelium"/>
    <property type="evidence" value="ECO:0000266"/>
    <property type="project" value="RGD"/>
</dbReference>
<dbReference type="GO" id="GO:0042789">
    <property type="term" value="P:mRNA transcription by RNA polymerase II"/>
    <property type="evidence" value="ECO:0000266"/>
    <property type="project" value="RGD"/>
</dbReference>
<dbReference type="GO" id="GO:0070254">
    <property type="term" value="P:mucus secretion"/>
    <property type="evidence" value="ECO:0000266"/>
    <property type="project" value="RGD"/>
</dbReference>
<dbReference type="GO" id="GO:0035264">
    <property type="term" value="P:multicellular organism growth"/>
    <property type="evidence" value="ECO:0000266"/>
    <property type="project" value="RGD"/>
</dbReference>
<dbReference type="GO" id="GO:0046716">
    <property type="term" value="P:muscle cell cellular homeostasis"/>
    <property type="evidence" value="ECO:0000266"/>
    <property type="project" value="RGD"/>
</dbReference>
<dbReference type="GO" id="GO:0030502">
    <property type="term" value="P:negative regulation of bone mineralization"/>
    <property type="evidence" value="ECO:0000250"/>
    <property type="project" value="UniProtKB"/>
</dbReference>
<dbReference type="GO" id="GO:0030308">
    <property type="term" value="P:negative regulation of cell growth"/>
    <property type="evidence" value="ECO:0000266"/>
    <property type="project" value="RGD"/>
</dbReference>
<dbReference type="GO" id="GO:0046325">
    <property type="term" value="P:negative regulation of D-glucose import"/>
    <property type="evidence" value="ECO:0000266"/>
    <property type="project" value="RGD"/>
</dbReference>
<dbReference type="GO" id="GO:0045599">
    <property type="term" value="P:negative regulation of fat cell differentiation"/>
    <property type="evidence" value="ECO:0000266"/>
    <property type="project" value="RGD"/>
</dbReference>
<dbReference type="GO" id="GO:0045719">
    <property type="term" value="P:negative regulation of glycogen biosynthetic process"/>
    <property type="evidence" value="ECO:0000266"/>
    <property type="project" value="RGD"/>
</dbReference>
<dbReference type="GO" id="GO:1990787">
    <property type="term" value="P:negative regulation of hh target transcription factor activity"/>
    <property type="evidence" value="ECO:0000250"/>
    <property type="project" value="UniProtKB"/>
</dbReference>
<dbReference type="GO" id="GO:0046627">
    <property type="term" value="P:negative regulation of insulin receptor signaling pathway"/>
    <property type="evidence" value="ECO:0000266"/>
    <property type="project" value="RGD"/>
</dbReference>
<dbReference type="GO" id="GO:0030279">
    <property type="term" value="P:negative regulation of ossification"/>
    <property type="evidence" value="ECO:0000266"/>
    <property type="project" value="RGD"/>
</dbReference>
<dbReference type="GO" id="GO:0051402">
    <property type="term" value="P:neuron apoptotic process"/>
    <property type="evidence" value="ECO:0000266"/>
    <property type="project" value="RGD"/>
</dbReference>
<dbReference type="GO" id="GO:0009143">
    <property type="term" value="P:nucleoside triphosphate catabolic process"/>
    <property type="evidence" value="ECO:0000266"/>
    <property type="project" value="RGD"/>
</dbReference>
<dbReference type="GO" id="GO:0042476">
    <property type="term" value="P:odontogenesis"/>
    <property type="evidence" value="ECO:0000266"/>
    <property type="project" value="RGD"/>
</dbReference>
<dbReference type="GO" id="GO:0021772">
    <property type="term" value="P:olfactory bulb development"/>
    <property type="evidence" value="ECO:0000270"/>
    <property type="project" value="RGD"/>
</dbReference>
<dbReference type="GO" id="GO:0097252">
    <property type="term" value="P:oligodendrocyte apoptotic process"/>
    <property type="evidence" value="ECO:0000266"/>
    <property type="project" value="RGD"/>
</dbReference>
<dbReference type="GO" id="GO:0019634">
    <property type="term" value="P:organic phosphonate metabolic process"/>
    <property type="evidence" value="ECO:0000266"/>
    <property type="project" value="RGD"/>
</dbReference>
<dbReference type="GO" id="GO:0001503">
    <property type="term" value="P:ossification"/>
    <property type="evidence" value="ECO:0000266"/>
    <property type="project" value="RGD"/>
</dbReference>
<dbReference type="GO" id="GO:0001649">
    <property type="term" value="P:osteoblast differentiation"/>
    <property type="evidence" value="ECO:0000266"/>
    <property type="project" value="RGD"/>
</dbReference>
<dbReference type="GO" id="GO:0030316">
    <property type="term" value="P:osteoclast differentiation"/>
    <property type="evidence" value="ECO:0000266"/>
    <property type="project" value="RGD"/>
</dbReference>
<dbReference type="GO" id="GO:0055062">
    <property type="term" value="P:phosphate ion homeostasis"/>
    <property type="evidence" value="ECO:0000266"/>
    <property type="project" value="RGD"/>
</dbReference>
<dbReference type="GO" id="GO:0006796">
    <property type="term" value="P:phosphate-containing compound metabolic process"/>
    <property type="evidence" value="ECO:0000266"/>
    <property type="project" value="RGD"/>
</dbReference>
<dbReference type="GO" id="GO:0002317">
    <property type="term" value="P:plasma cell differentiation"/>
    <property type="evidence" value="ECO:0000266"/>
    <property type="project" value="RGD"/>
</dbReference>
<dbReference type="GO" id="GO:0035128">
    <property type="term" value="P:post-embryonic forelimb morphogenesis"/>
    <property type="evidence" value="ECO:0000266"/>
    <property type="project" value="RGD"/>
</dbReference>
<dbReference type="GO" id="GO:0070212">
    <property type="term" value="P:protein poly-ADP-ribosylation"/>
    <property type="evidence" value="ECO:0000266"/>
    <property type="project" value="RGD"/>
</dbReference>
<dbReference type="GO" id="GO:0030500">
    <property type="term" value="P:regulation of bone mineralization"/>
    <property type="evidence" value="ECO:0000318"/>
    <property type="project" value="GO_Central"/>
</dbReference>
<dbReference type="GO" id="GO:0033198">
    <property type="term" value="P:response to ATP"/>
    <property type="evidence" value="ECO:0000266"/>
    <property type="project" value="RGD"/>
</dbReference>
<dbReference type="GO" id="GO:0002021">
    <property type="term" value="P:response to dietary excess"/>
    <property type="evidence" value="ECO:0000266"/>
    <property type="project" value="RGD"/>
</dbReference>
<dbReference type="GO" id="GO:0140459">
    <property type="term" value="P:response to Gram-positive bacterium"/>
    <property type="evidence" value="ECO:0000266"/>
    <property type="project" value="RGD"/>
</dbReference>
<dbReference type="GO" id="GO:0032868">
    <property type="term" value="P:response to insulin"/>
    <property type="evidence" value="ECO:0000266"/>
    <property type="project" value="RGD"/>
</dbReference>
<dbReference type="GO" id="GO:0032026">
    <property type="term" value="P:response to magnesium ion"/>
    <property type="evidence" value="ECO:0000266"/>
    <property type="project" value="RGD"/>
</dbReference>
<dbReference type="GO" id="GO:0009612">
    <property type="term" value="P:response to mechanical stimulus"/>
    <property type="evidence" value="ECO:0000270"/>
    <property type="project" value="RGD"/>
</dbReference>
<dbReference type="GO" id="GO:0036119">
    <property type="term" value="P:response to platelet-derived growth factor"/>
    <property type="evidence" value="ECO:0000266"/>
    <property type="project" value="RGD"/>
</dbReference>
<dbReference type="GO" id="GO:1904383">
    <property type="term" value="P:response to sodium phosphate"/>
    <property type="evidence" value="ECO:0000266"/>
    <property type="project" value="RGD"/>
</dbReference>
<dbReference type="GO" id="GO:0034516">
    <property type="term" value="P:response to vitamin B6"/>
    <property type="evidence" value="ECO:0000266"/>
    <property type="project" value="RGD"/>
</dbReference>
<dbReference type="GO" id="GO:0009611">
    <property type="term" value="P:response to wounding"/>
    <property type="evidence" value="ECO:0000266"/>
    <property type="project" value="RGD"/>
</dbReference>
<dbReference type="GO" id="GO:0050954">
    <property type="term" value="P:sensory perception of mechanical stimulus"/>
    <property type="evidence" value="ECO:0000266"/>
    <property type="project" value="RGD"/>
</dbReference>
<dbReference type="GO" id="GO:0007605">
    <property type="term" value="P:sensory perception of sound"/>
    <property type="evidence" value="ECO:0000266"/>
    <property type="project" value="RGD"/>
</dbReference>
<dbReference type="GO" id="GO:0050951">
    <property type="term" value="P:sensory perception of temperature stimulus"/>
    <property type="evidence" value="ECO:0000266"/>
    <property type="project" value="RGD"/>
</dbReference>
<dbReference type="GO" id="GO:0043588">
    <property type="term" value="P:skin development"/>
    <property type="evidence" value="ECO:0000266"/>
    <property type="project" value="RGD"/>
</dbReference>
<dbReference type="GO" id="GO:0007224">
    <property type="term" value="P:smoothened signaling pathway"/>
    <property type="evidence" value="ECO:0000266"/>
    <property type="project" value="RGD"/>
</dbReference>
<dbReference type="GO" id="GO:0021510">
    <property type="term" value="P:spinal cord development"/>
    <property type="evidence" value="ECO:0000266"/>
    <property type="project" value="RGD"/>
</dbReference>
<dbReference type="GO" id="GO:0021756">
    <property type="term" value="P:striatum development"/>
    <property type="evidence" value="ECO:0000270"/>
    <property type="project" value="RGD"/>
</dbReference>
<dbReference type="GO" id="GO:0030217">
    <property type="term" value="P:T cell differentiation"/>
    <property type="evidence" value="ECO:0000266"/>
    <property type="project" value="RGD"/>
</dbReference>
<dbReference type="GO" id="GO:0034505">
    <property type="term" value="P:tooth mineralization"/>
    <property type="evidence" value="ECO:0000266"/>
    <property type="project" value="RGD"/>
</dbReference>
<dbReference type="GO" id="GO:1904738">
    <property type="term" value="P:vascular associated smooth muscle cell migration"/>
    <property type="evidence" value="ECO:0000266"/>
    <property type="project" value="RGD"/>
</dbReference>
<dbReference type="GO" id="GO:1990874">
    <property type="term" value="P:vascular associated smooth muscle cell proliferation"/>
    <property type="evidence" value="ECO:0000266"/>
    <property type="project" value="RGD"/>
</dbReference>
<dbReference type="GO" id="GO:0001570">
    <property type="term" value="P:vasculogenesis"/>
    <property type="evidence" value="ECO:0000266"/>
    <property type="project" value="RGD"/>
</dbReference>
<dbReference type="GO" id="GO:0070640">
    <property type="term" value="P:vitamin D3 metabolic process"/>
    <property type="evidence" value="ECO:0000266"/>
    <property type="project" value="RGD"/>
</dbReference>
<dbReference type="GO" id="GO:0016055">
    <property type="term" value="P:Wnt signaling pathway"/>
    <property type="evidence" value="ECO:0000266"/>
    <property type="project" value="RGD"/>
</dbReference>
<dbReference type="CDD" id="cd16018">
    <property type="entry name" value="Enpp"/>
    <property type="match status" value="1"/>
</dbReference>
<dbReference type="CDD" id="cd00091">
    <property type="entry name" value="NUC"/>
    <property type="match status" value="1"/>
</dbReference>
<dbReference type="FunFam" id="3.40.720.10:FF:000010">
    <property type="entry name" value="Ectonucleotide pyrophosphatase/phosphodiesterase family member 1"/>
    <property type="match status" value="1"/>
</dbReference>
<dbReference type="FunFam" id="4.10.410.20:FF:000003">
    <property type="entry name" value="Ectonucleotide pyrophosphatase/phosphodiesterase family member 1"/>
    <property type="match status" value="1"/>
</dbReference>
<dbReference type="FunFam" id="3.40.570.10:FF:000006">
    <property type="entry name" value="ectonucleotide pyrophosphatase/phosphodiesterase family member 1"/>
    <property type="match status" value="1"/>
</dbReference>
<dbReference type="FunFam" id="4.10.410.20:FF:000001">
    <property type="entry name" value="Ectonucleotide pyrophosphatase/phosphodiesterase family member 2"/>
    <property type="match status" value="1"/>
</dbReference>
<dbReference type="Gene3D" id="4.10.410.20">
    <property type="match status" value="2"/>
</dbReference>
<dbReference type="Gene3D" id="3.40.720.10">
    <property type="entry name" value="Alkaline Phosphatase, subunit A"/>
    <property type="match status" value="1"/>
</dbReference>
<dbReference type="Gene3D" id="3.40.570.10">
    <property type="entry name" value="Extracellular Endonuclease, subunit A"/>
    <property type="match status" value="1"/>
</dbReference>
<dbReference type="InterPro" id="IPR017850">
    <property type="entry name" value="Alkaline_phosphatase_core_sf"/>
</dbReference>
<dbReference type="InterPro" id="IPR044929">
    <property type="entry name" value="DNA/RNA_non-sp_Endonuclease_sf"/>
</dbReference>
<dbReference type="InterPro" id="IPR001604">
    <property type="entry name" value="Endo_G_ENPP1-like_dom"/>
</dbReference>
<dbReference type="InterPro" id="IPR020821">
    <property type="entry name" value="ENPP1-3/EXOG-like_nuc-like"/>
</dbReference>
<dbReference type="InterPro" id="IPR044925">
    <property type="entry name" value="His-Me_finger_sf"/>
</dbReference>
<dbReference type="InterPro" id="IPR002591">
    <property type="entry name" value="Phosphodiest/P_Trfase"/>
</dbReference>
<dbReference type="InterPro" id="IPR020436">
    <property type="entry name" value="SMB_chordata"/>
</dbReference>
<dbReference type="InterPro" id="IPR036024">
    <property type="entry name" value="Somatomedin_B-like_dom_sf"/>
</dbReference>
<dbReference type="InterPro" id="IPR001212">
    <property type="entry name" value="Somatomedin_B_dom"/>
</dbReference>
<dbReference type="PANTHER" id="PTHR10151">
    <property type="entry name" value="ECTONUCLEOTIDE PYROPHOSPHATASE/PHOSPHODIESTERASE"/>
    <property type="match status" value="1"/>
</dbReference>
<dbReference type="PANTHER" id="PTHR10151:SF77">
    <property type="entry name" value="ECTONUCLEOTIDE PYROPHOSPHATASE_PHOSPHODIESTERASE FAMILY MEMBER 1"/>
    <property type="match status" value="1"/>
</dbReference>
<dbReference type="Pfam" id="PF01223">
    <property type="entry name" value="Endonuclease_NS"/>
    <property type="match status" value="1"/>
</dbReference>
<dbReference type="Pfam" id="PF01663">
    <property type="entry name" value="Phosphodiest"/>
    <property type="match status" value="1"/>
</dbReference>
<dbReference type="Pfam" id="PF01033">
    <property type="entry name" value="Somatomedin_B"/>
    <property type="match status" value="2"/>
</dbReference>
<dbReference type="PRINTS" id="PR00022">
    <property type="entry name" value="SOMATOMEDINB"/>
</dbReference>
<dbReference type="SMART" id="SM00892">
    <property type="entry name" value="Endonuclease_NS"/>
    <property type="match status" value="1"/>
</dbReference>
<dbReference type="SMART" id="SM00477">
    <property type="entry name" value="NUC"/>
    <property type="match status" value="1"/>
</dbReference>
<dbReference type="SMART" id="SM00201">
    <property type="entry name" value="SO"/>
    <property type="match status" value="2"/>
</dbReference>
<dbReference type="SUPFAM" id="SSF53649">
    <property type="entry name" value="Alkaline phosphatase-like"/>
    <property type="match status" value="1"/>
</dbReference>
<dbReference type="SUPFAM" id="SSF54060">
    <property type="entry name" value="His-Me finger endonucleases"/>
    <property type="match status" value="1"/>
</dbReference>
<dbReference type="SUPFAM" id="SSF90188">
    <property type="entry name" value="Somatomedin B domain"/>
    <property type="match status" value="2"/>
</dbReference>
<dbReference type="PROSITE" id="PS00524">
    <property type="entry name" value="SMB_1"/>
    <property type="match status" value="2"/>
</dbReference>
<dbReference type="PROSITE" id="PS50958">
    <property type="entry name" value="SMB_2"/>
    <property type="match status" value="2"/>
</dbReference>
<comment type="function">
    <text evidence="1 2">Nucleotide pyrophosphatase that generates diphosphate (PPi) and functions in bone mineralization and soft tissue calcification by regulating pyrophosphate levels. PPi inhibits bone mineralization and soft tissue calcification by binding to nascent hydroxyapatite crystals, thereby preventing further growth of these crystals. Preferentially hydrolyzes ATP, but can also hydrolyze other nucleoside 5' triphosphates such as GTP, CTP and UTP to their corresponding monophosphates with release of pyrophosphate, as well as diadenosine polyphosphates, and also 3',5'-cAMP to AMP. May also be involved in the regulation of the availability of nucleotide sugars in the endoplasmic reticulum and Golgi, and the regulation of purinergic signaling. Inhibits ectopic joint calcification and maintains articular chondrocytes by repressing hedgehog signaling; it is however unclear whether hedgehog inhibition is direct or indirect (By similarity). Appears to modulate insulin sensitivity. Also involved in melanogenesis (By similarity). Also able to hydrolyze 2',3'-cGAMP (cyclic GMP-AMP), a second messenger that activates TMEM173/STING and triggers type-I interferon production (By similarity). 2',3'-cGAMP degradation takes place in the lumen or extracellular space, and not in the cytosol where it is produced; the role of 2',3'-cGAMP hydrolysis is therefore unclear. Not able to hydrolyze the 2',3'-cGAMP linkage isomer 3'-3'-cGAMP (By similarity).</text>
</comment>
<comment type="catalytic activity">
    <reaction evidence="1">
        <text>Hydrolytically removes 5'-nucleotides successively from the 3'-hydroxy termini of 3'-hydroxy-terminated oligonucleotides.</text>
        <dbReference type="EC" id="3.1.4.1"/>
    </reaction>
</comment>
<comment type="catalytic activity">
    <reaction evidence="2">
        <text>a ribonucleoside 5'-triphosphate + H2O = a ribonucleoside 5'-phosphate + diphosphate + H(+)</text>
        <dbReference type="Rhea" id="RHEA:23996"/>
        <dbReference type="ChEBI" id="CHEBI:15377"/>
        <dbReference type="ChEBI" id="CHEBI:15378"/>
        <dbReference type="ChEBI" id="CHEBI:33019"/>
        <dbReference type="ChEBI" id="CHEBI:58043"/>
        <dbReference type="ChEBI" id="CHEBI:61557"/>
        <dbReference type="EC" id="3.6.1.9"/>
    </reaction>
    <physiologicalReaction direction="left-to-right" evidence="2">
        <dbReference type="Rhea" id="RHEA:23997"/>
    </physiologicalReaction>
</comment>
<comment type="catalytic activity">
    <reaction evidence="2">
        <text>ATP + H2O = AMP + diphosphate + H(+)</text>
        <dbReference type="Rhea" id="RHEA:14245"/>
        <dbReference type="ChEBI" id="CHEBI:15377"/>
        <dbReference type="ChEBI" id="CHEBI:15378"/>
        <dbReference type="ChEBI" id="CHEBI:30616"/>
        <dbReference type="ChEBI" id="CHEBI:33019"/>
        <dbReference type="ChEBI" id="CHEBI:456215"/>
        <dbReference type="EC" id="3.6.1.9"/>
    </reaction>
    <physiologicalReaction direction="left-to-right" evidence="2">
        <dbReference type="Rhea" id="RHEA:14246"/>
    </physiologicalReaction>
</comment>
<comment type="catalytic activity">
    <reaction evidence="2">
        <text>UTP + H2O = UMP + diphosphate + H(+)</text>
        <dbReference type="Rhea" id="RHEA:29395"/>
        <dbReference type="ChEBI" id="CHEBI:15377"/>
        <dbReference type="ChEBI" id="CHEBI:15378"/>
        <dbReference type="ChEBI" id="CHEBI:33019"/>
        <dbReference type="ChEBI" id="CHEBI:46398"/>
        <dbReference type="ChEBI" id="CHEBI:57865"/>
        <dbReference type="EC" id="3.6.1.9"/>
    </reaction>
    <physiologicalReaction direction="left-to-right" evidence="2">
        <dbReference type="Rhea" id="RHEA:29396"/>
    </physiologicalReaction>
</comment>
<comment type="catalytic activity">
    <reaction evidence="1">
        <text>GTP + H2O = GMP + diphosphate + H(+)</text>
        <dbReference type="Rhea" id="RHEA:29391"/>
        <dbReference type="ChEBI" id="CHEBI:15377"/>
        <dbReference type="ChEBI" id="CHEBI:15378"/>
        <dbReference type="ChEBI" id="CHEBI:33019"/>
        <dbReference type="ChEBI" id="CHEBI:37565"/>
        <dbReference type="ChEBI" id="CHEBI:58115"/>
        <dbReference type="EC" id="3.6.1.9"/>
    </reaction>
    <physiologicalReaction direction="left-to-right" evidence="1">
        <dbReference type="Rhea" id="RHEA:29392"/>
    </physiologicalReaction>
</comment>
<comment type="catalytic activity">
    <reaction evidence="1">
        <text>CTP + H2O = CMP + diphosphate + H(+)</text>
        <dbReference type="Rhea" id="RHEA:27762"/>
        <dbReference type="ChEBI" id="CHEBI:15377"/>
        <dbReference type="ChEBI" id="CHEBI:15378"/>
        <dbReference type="ChEBI" id="CHEBI:33019"/>
        <dbReference type="ChEBI" id="CHEBI:37563"/>
        <dbReference type="ChEBI" id="CHEBI:60377"/>
        <dbReference type="EC" id="3.6.1.9"/>
    </reaction>
    <physiologicalReaction direction="left-to-right" evidence="1">
        <dbReference type="Rhea" id="RHEA:27763"/>
    </physiologicalReaction>
</comment>
<comment type="catalytic activity">
    <reaction evidence="2">
        <text>2',3'-cGAMP + 2 H2O = GMP + AMP + 2 H(+)</text>
        <dbReference type="Rhea" id="RHEA:58808"/>
        <dbReference type="ChEBI" id="CHEBI:15377"/>
        <dbReference type="ChEBI" id="CHEBI:15378"/>
        <dbReference type="ChEBI" id="CHEBI:58115"/>
        <dbReference type="ChEBI" id="CHEBI:143093"/>
        <dbReference type="ChEBI" id="CHEBI:456215"/>
    </reaction>
    <physiologicalReaction direction="left-to-right" evidence="2">
        <dbReference type="Rhea" id="RHEA:58809"/>
    </physiologicalReaction>
</comment>
<comment type="catalytic activity">
    <reaction evidence="2">
        <text>P(1),P(4)-bis(5'-adenosyl) tetraphosphate + H2O = AMP + ATP + 2 H(+)</text>
        <dbReference type="Rhea" id="RHEA:32039"/>
        <dbReference type="ChEBI" id="CHEBI:15377"/>
        <dbReference type="ChEBI" id="CHEBI:15378"/>
        <dbReference type="ChEBI" id="CHEBI:30616"/>
        <dbReference type="ChEBI" id="CHEBI:58141"/>
        <dbReference type="ChEBI" id="CHEBI:456215"/>
    </reaction>
    <physiologicalReaction direction="left-to-right" evidence="2">
        <dbReference type="Rhea" id="RHEA:32040"/>
    </physiologicalReaction>
</comment>
<comment type="catalytic activity">
    <reaction evidence="2">
        <text>3',5'-cyclic AMP + H2O = AMP + H(+)</text>
        <dbReference type="Rhea" id="RHEA:25277"/>
        <dbReference type="ChEBI" id="CHEBI:15377"/>
        <dbReference type="ChEBI" id="CHEBI:15378"/>
        <dbReference type="ChEBI" id="CHEBI:58165"/>
        <dbReference type="ChEBI" id="CHEBI:456215"/>
    </reaction>
    <physiologicalReaction direction="left-to-right" evidence="2">
        <dbReference type="Rhea" id="RHEA:25278"/>
    </physiologicalReaction>
</comment>
<comment type="cofactor">
    <cofactor evidence="1">
        <name>Zn(2+)</name>
        <dbReference type="ChEBI" id="CHEBI:29105"/>
    </cofactor>
    <text evidence="1">Binds 2 Zn(2+) ions per subunit.</text>
</comment>
<comment type="activity regulation">
    <text evidence="1">At low concentrations of ATP, a phosphorylated intermediate is formed which inhibits further hydrolysis.</text>
</comment>
<comment type="subunit">
    <text evidence="1 2">Ectonucleotide pyrophosphatase/phosphodiesterase family member 1: Homodimer (By similarity). Ectonucleotide pyrophosphatase/phosphodiesterase family member 1: Interacts with INSR; leading to inhibit INSR autophosphorylation and subsequent activation of INSR kinase activity (By similarity). Ectonucleotide pyrophosphatase/phosphodiesterase family member 1, secreted form: Monomeric (By similarity).</text>
</comment>
<comment type="subcellular location">
    <molecule>Ectonucleotide pyrophosphatase/phosphodiesterase family member 1</molecule>
    <subcellularLocation>
        <location evidence="1">Cell membrane</location>
        <topology evidence="1">Single-pass type II membrane protein</topology>
    </subcellularLocation>
    <subcellularLocation>
        <location evidence="1">Basolateral cell membrane</location>
        <topology evidence="1">Single-pass type II membrane protein</topology>
    </subcellularLocation>
    <text evidence="1">Targeted to the basolateral membrane in polarized epithelial cells and in hepatocytes, and to matrix vesicles in osteoblasts.</text>
</comment>
<comment type="subcellular location">
    <molecule>Ectonucleotide pyrophosphatase/phosphodiesterase family member 1, secreted form</molecule>
    <subcellularLocation>
        <location evidence="1">Secreted</location>
    </subcellularLocation>
    <text evidence="1">Secreted following proteolytic cleavage.</text>
</comment>
<comment type="alternative products">
    <event type="alternative splicing"/>
    <isoform>
        <id>Q924C3-1</id>
        <name>2</name>
        <sequence type="displayed"/>
    </isoform>
    <isoform>
        <id>Q924C3-2</id>
        <name>1</name>
        <sequence type="described" ref="VSP_006749"/>
    </isoform>
</comment>
<comment type="domain">
    <text evidence="1">The di-leucine motif is required for basolateral targeting in polarized epithelial cells, and for targeting to matrix vesicles derived from mineralizing cells.</text>
</comment>
<comment type="domain">
    <text evidence="1">The nuclease-like domain is most probably catalytically inactive as residues that are essential for catalysis in the DNA/RNA non-specific endonucleases are not conserved. However, it is required for the stability of the protein and the catalytic activity born by the phosphodiesterase domain.</text>
</comment>
<comment type="PTM">
    <text evidence="1">The secreted form is produced through cleavage at Lys-85 by intracellular processing.</text>
</comment>
<comment type="similarity">
    <text evidence="8">Belongs to the nucleotide pyrophosphatase/phosphodiesterase family.</text>
</comment>
<comment type="caution">
    <text evidence="8">It is uncertain whether Met-1 or Met-35 is the initiator.</text>
</comment>
<feature type="chain" id="PRO_0000188566" description="Ectonucleotide pyrophosphatase/phosphodiesterase family member 1">
    <location>
        <begin position="1"/>
        <end position="906"/>
    </location>
</feature>
<feature type="chain" id="PRO_0000447135" description="Ectonucleotide pyrophosphatase/phosphodiesterase family member 1, secreted form" evidence="1">
    <location>
        <begin position="85"/>
        <end position="906"/>
    </location>
</feature>
<feature type="topological domain" description="Cytoplasmic" evidence="4">
    <location>
        <begin position="1"/>
        <end position="58"/>
    </location>
</feature>
<feature type="transmembrane region" description="Helical; Signal-anchor for type II membrane protein" evidence="4">
    <location>
        <begin position="59"/>
        <end position="79"/>
    </location>
</feature>
<feature type="topological domain" description="Extracellular" evidence="4">
    <location>
        <begin position="80"/>
        <end position="906"/>
    </location>
</feature>
<feature type="domain" description="SMB 1" evidence="5">
    <location>
        <begin position="86"/>
        <end position="126"/>
    </location>
</feature>
<feature type="domain" description="SMB 2" evidence="5">
    <location>
        <begin position="127"/>
        <end position="170"/>
    </location>
</feature>
<feature type="region of interest" description="Disordered" evidence="6">
    <location>
        <begin position="1"/>
        <end position="25"/>
    </location>
</feature>
<feature type="region of interest" description="Phosphodiesterase" evidence="1">
    <location>
        <begin position="173"/>
        <end position="573"/>
    </location>
</feature>
<feature type="region of interest" description="Linker" evidence="1">
    <location>
        <begin position="579"/>
        <end position="628"/>
    </location>
</feature>
<feature type="region of interest" description="Nuclease-like domain" evidence="1">
    <location>
        <begin position="635"/>
        <end position="906"/>
    </location>
</feature>
<feature type="short sequence motif" description="Di-leucine motif" evidence="1">
    <location>
        <begin position="27"/>
        <end position="34"/>
    </location>
</feature>
<feature type="active site" description="AMP-threonine intermediate" evidence="1">
    <location>
        <position position="238"/>
    </location>
</feature>
<feature type="binding site" evidence="1">
    <location>
        <position position="200"/>
    </location>
    <ligand>
        <name>AMP</name>
        <dbReference type="ChEBI" id="CHEBI:456215"/>
    </ligand>
</feature>
<feature type="binding site" evidence="1">
    <location>
        <position position="200"/>
    </location>
    <ligand>
        <name>Zn(2+)</name>
        <dbReference type="ChEBI" id="CHEBI:29105"/>
        <label>1</label>
        <note>catalytic</note>
    </ligand>
</feature>
<feature type="binding site" evidence="1">
    <location>
        <position position="238"/>
    </location>
    <ligand>
        <name>AMP</name>
        <dbReference type="ChEBI" id="CHEBI:456215"/>
    </ligand>
</feature>
<feature type="binding site" evidence="1">
    <location>
        <position position="238"/>
    </location>
    <ligand>
        <name>CMP</name>
        <dbReference type="ChEBI" id="CHEBI:60377"/>
    </ligand>
</feature>
<feature type="binding site" evidence="1">
    <location>
        <position position="238"/>
    </location>
    <ligand>
        <name>dTMP</name>
        <dbReference type="ChEBI" id="CHEBI:63528"/>
    </ligand>
</feature>
<feature type="binding site" evidence="1">
    <location>
        <position position="238"/>
    </location>
    <ligand>
        <name>GMP</name>
        <dbReference type="ChEBI" id="CHEBI:58115"/>
    </ligand>
</feature>
<feature type="binding site" evidence="1">
    <location>
        <position position="238"/>
    </location>
    <ligand>
        <name>Zn(2+)</name>
        <dbReference type="ChEBI" id="CHEBI:29105"/>
        <label>1</label>
        <note>catalytic</note>
    </ligand>
</feature>
<feature type="binding site" evidence="1">
    <location>
        <position position="259"/>
    </location>
    <ligand>
        <name>AMP</name>
        <dbReference type="ChEBI" id="CHEBI:456215"/>
    </ligand>
</feature>
<feature type="binding site" evidence="1">
    <location>
        <position position="259"/>
    </location>
    <ligand>
        <name>CMP</name>
        <dbReference type="ChEBI" id="CHEBI:60377"/>
    </ligand>
</feature>
<feature type="binding site" evidence="1">
    <location>
        <position position="259"/>
    </location>
    <ligand>
        <name>dTMP</name>
        <dbReference type="ChEBI" id="CHEBI:63528"/>
    </ligand>
</feature>
<feature type="binding site" evidence="1">
    <location>
        <position position="259"/>
    </location>
    <ligand>
        <name>GMP</name>
        <dbReference type="ChEBI" id="CHEBI:58115"/>
    </ligand>
</feature>
<feature type="binding site" evidence="1">
    <location>
        <position position="272"/>
    </location>
    <ligand>
        <name>GMP</name>
        <dbReference type="ChEBI" id="CHEBI:58115"/>
    </ligand>
</feature>
<feature type="binding site" evidence="1">
    <location>
        <position position="277"/>
    </location>
    <ligand>
        <name>AMP</name>
        <dbReference type="ChEBI" id="CHEBI:456215"/>
    </ligand>
</feature>
<feature type="binding site" evidence="1">
    <location>
        <position position="277"/>
    </location>
    <ligand>
        <name>CMP</name>
        <dbReference type="ChEBI" id="CHEBI:60377"/>
    </ligand>
</feature>
<feature type="binding site" evidence="1">
    <location>
        <position position="277"/>
    </location>
    <ligand>
        <name>GMP</name>
        <dbReference type="ChEBI" id="CHEBI:58115"/>
    </ligand>
</feature>
<feature type="binding site" evidence="1">
    <location>
        <position position="322"/>
    </location>
    <ligand>
        <name>AMP</name>
        <dbReference type="ChEBI" id="CHEBI:456215"/>
    </ligand>
</feature>
<feature type="binding site" evidence="1">
    <location>
        <position position="322"/>
    </location>
    <ligand>
        <name>CMP</name>
        <dbReference type="ChEBI" id="CHEBI:60377"/>
    </ligand>
</feature>
<feature type="binding site" evidence="1">
    <location>
        <position position="322"/>
    </location>
    <ligand>
        <name>dTMP</name>
        <dbReference type="ChEBI" id="CHEBI:63528"/>
    </ligand>
</feature>
<feature type="binding site" evidence="1">
    <location>
        <position position="322"/>
    </location>
    <ligand>
        <name>GMP</name>
        <dbReference type="ChEBI" id="CHEBI:58115"/>
    </ligand>
</feature>
<feature type="binding site" evidence="1">
    <location>
        <position position="358"/>
    </location>
    <ligand>
        <name>AMP</name>
        <dbReference type="ChEBI" id="CHEBI:456215"/>
    </ligand>
</feature>
<feature type="binding site" evidence="1">
    <location>
        <position position="358"/>
    </location>
    <ligand>
        <name>CMP</name>
        <dbReference type="ChEBI" id="CHEBI:60377"/>
    </ligand>
</feature>
<feature type="binding site" evidence="1">
    <location>
        <position position="358"/>
    </location>
    <ligand>
        <name>dTMP</name>
        <dbReference type="ChEBI" id="CHEBI:63528"/>
    </ligand>
</feature>
<feature type="binding site" evidence="1">
    <location>
        <position position="358"/>
    </location>
    <ligand>
        <name>GMP</name>
        <dbReference type="ChEBI" id="CHEBI:58115"/>
    </ligand>
</feature>
<feature type="binding site" evidence="1">
    <location>
        <position position="358"/>
    </location>
    <ligand>
        <name>Zn(2+)</name>
        <dbReference type="ChEBI" id="CHEBI:29105"/>
        <label>2</label>
        <note>catalytic</note>
    </ligand>
</feature>
<feature type="binding site" evidence="1">
    <location>
        <position position="362"/>
    </location>
    <ligand>
        <name>2',3'-cGAMP</name>
        <dbReference type="ChEBI" id="CHEBI:143093"/>
        <note>substrate</note>
    </ligand>
</feature>
<feature type="binding site" evidence="1">
    <location>
        <position position="362"/>
    </location>
    <ligand>
        <name>Zn(2+)</name>
        <dbReference type="ChEBI" id="CHEBI:29105"/>
        <label>2</label>
        <note>catalytic</note>
    </ligand>
</feature>
<feature type="binding site" evidence="1">
    <location>
        <position position="405"/>
    </location>
    <ligand>
        <name>Zn(2+)</name>
        <dbReference type="ChEBI" id="CHEBI:29105"/>
        <label>1</label>
        <note>catalytic</note>
    </ligand>
</feature>
<feature type="binding site" evidence="1">
    <location>
        <position position="406"/>
    </location>
    <ligand>
        <name>AMP</name>
        <dbReference type="ChEBI" id="CHEBI:456215"/>
    </ligand>
</feature>
<feature type="binding site" evidence="1">
    <location>
        <position position="406"/>
    </location>
    <ligand>
        <name>CMP</name>
        <dbReference type="ChEBI" id="CHEBI:60377"/>
    </ligand>
</feature>
<feature type="binding site" evidence="1">
    <location>
        <position position="406"/>
    </location>
    <ligand>
        <name>dTMP</name>
        <dbReference type="ChEBI" id="CHEBI:63528"/>
    </ligand>
</feature>
<feature type="binding site" evidence="1">
    <location>
        <position position="406"/>
    </location>
    <ligand>
        <name>GMP</name>
        <dbReference type="ChEBI" id="CHEBI:58115"/>
    </ligand>
</feature>
<feature type="binding site" evidence="1">
    <location>
        <position position="406"/>
    </location>
    <ligand>
        <name>Zn(2+)</name>
        <dbReference type="ChEBI" id="CHEBI:29105"/>
        <label>1</label>
        <note>catalytic</note>
    </ligand>
</feature>
<feature type="binding site" evidence="1">
    <location>
        <position position="514"/>
    </location>
    <ligand>
        <name>2',3'-cGAMP</name>
        <dbReference type="ChEBI" id="CHEBI:143093"/>
        <note>substrate</note>
    </ligand>
</feature>
<feature type="binding site" evidence="1">
    <location>
        <position position="517"/>
    </location>
    <ligand>
        <name>AMP</name>
        <dbReference type="ChEBI" id="CHEBI:456215"/>
    </ligand>
</feature>
<feature type="binding site" evidence="1">
    <location>
        <position position="517"/>
    </location>
    <ligand>
        <name>CMP</name>
        <dbReference type="ChEBI" id="CHEBI:60377"/>
    </ligand>
</feature>
<feature type="binding site" evidence="1">
    <location>
        <position position="517"/>
    </location>
    <ligand>
        <name>dTMP</name>
        <dbReference type="ChEBI" id="CHEBI:63528"/>
    </ligand>
</feature>
<feature type="binding site" evidence="1">
    <location>
        <position position="517"/>
    </location>
    <ligand>
        <name>GMP</name>
        <dbReference type="ChEBI" id="CHEBI:58115"/>
    </ligand>
</feature>
<feature type="binding site" evidence="1">
    <location>
        <position position="517"/>
    </location>
    <ligand>
        <name>Zn(2+)</name>
        <dbReference type="ChEBI" id="CHEBI:29105"/>
        <label>2</label>
        <note>catalytic</note>
    </ligand>
</feature>
<feature type="binding site" evidence="1">
    <location>
        <position position="781"/>
    </location>
    <ligand>
        <name>Ca(2+)</name>
        <dbReference type="ChEBI" id="CHEBI:29108"/>
    </ligand>
</feature>
<feature type="binding site" evidence="1">
    <location>
        <position position="783"/>
    </location>
    <ligand>
        <name>Ca(2+)</name>
        <dbReference type="ChEBI" id="CHEBI:29108"/>
    </ligand>
</feature>
<feature type="binding site" evidence="1">
    <location>
        <position position="785"/>
    </location>
    <ligand>
        <name>Ca(2+)</name>
        <dbReference type="ChEBI" id="CHEBI:29108"/>
    </ligand>
</feature>
<feature type="binding site" evidence="1">
    <location>
        <position position="787"/>
    </location>
    <ligand>
        <name>Ca(2+)</name>
        <dbReference type="ChEBI" id="CHEBI:29108"/>
    </ligand>
</feature>
<feature type="binding site" evidence="1">
    <location>
        <position position="789"/>
    </location>
    <ligand>
        <name>Ca(2+)</name>
        <dbReference type="ChEBI" id="CHEBI:29108"/>
    </ligand>
</feature>
<feature type="site" description="Cleavage" evidence="1">
    <location>
        <begin position="84"/>
        <end position="85"/>
    </location>
</feature>
<feature type="site" description="Essential for catalytic activity" evidence="3">
    <location>
        <position position="896"/>
    </location>
</feature>
<feature type="modified residue" description="Phosphoserine" evidence="10">
    <location>
        <position position="25"/>
    </location>
</feature>
<feature type="modified residue" description="Phosphothreonine" evidence="10">
    <location>
        <position position="238"/>
    </location>
</feature>
<feature type="glycosylation site" description="N-linked (GlcNAc...) asparagine" evidence="4">
    <location>
        <position position="161"/>
    </location>
</feature>
<feature type="glycosylation site" description="N-linked (GlcNAc...) asparagine" evidence="4">
    <location>
        <position position="267"/>
    </location>
</feature>
<feature type="glycosylation site" description="N-linked (GlcNAc...) asparagine" evidence="4">
    <location>
        <position position="323"/>
    </location>
</feature>
<feature type="glycosylation site" description="N-linked (GlcNAc...) asparagine" evidence="4">
    <location>
        <position position="459"/>
    </location>
</feature>
<feature type="glycosylation site" description="N-linked (GlcNAc...) asparagine" evidence="4">
    <location>
        <position position="567"/>
    </location>
</feature>
<feature type="glycosylation site" description="N-linked (GlcNAc...) asparagine" evidence="4">
    <location>
        <position position="624"/>
    </location>
</feature>
<feature type="disulfide bond" evidence="5">
    <location>
        <begin position="90"/>
        <end position="104"/>
    </location>
</feature>
<feature type="disulfide bond" evidence="5">
    <location>
        <begin position="94"/>
        <end position="122"/>
    </location>
</feature>
<feature type="disulfide bond" evidence="5">
    <location>
        <begin position="102"/>
        <end position="115"/>
    </location>
</feature>
<feature type="disulfide bond" evidence="5">
    <location>
        <begin position="108"/>
        <end position="114"/>
    </location>
</feature>
<feature type="disulfide bond" evidence="5">
    <location>
        <begin position="131"/>
        <end position="148"/>
    </location>
</feature>
<feature type="disulfide bond" evidence="5">
    <location>
        <begin position="136"/>
        <end position="166"/>
    </location>
</feature>
<feature type="disulfide bond" evidence="5">
    <location>
        <begin position="146"/>
        <end position="159"/>
    </location>
</feature>
<feature type="disulfide bond" evidence="5">
    <location>
        <begin position="152"/>
        <end position="158"/>
    </location>
</feature>
<feature type="disulfide bond" evidence="5">
    <location>
        <begin position="177"/>
        <end position="223"/>
    </location>
</feature>
<feature type="disulfide bond" evidence="5">
    <location>
        <begin position="185"/>
        <end position="397"/>
    </location>
</feature>
<feature type="disulfide bond" evidence="5">
    <location>
        <begin position="413"/>
        <end position="512"/>
    </location>
</feature>
<feature type="disulfide bond" evidence="5">
    <location>
        <begin position="462"/>
        <end position="849"/>
    </location>
</feature>
<feature type="disulfide bond" evidence="5">
    <location>
        <begin position="596"/>
        <end position="653"/>
    </location>
</feature>
<feature type="disulfide bond" evidence="5">
    <location>
        <begin position="607"/>
        <end position="707"/>
    </location>
</feature>
<feature type="disulfide bond" evidence="5">
    <location>
        <begin position="609"/>
        <end position="692"/>
    </location>
</feature>
<feature type="disulfide bond" evidence="5">
    <location>
        <begin position="819"/>
        <end position="829"/>
    </location>
</feature>
<feature type="splice variant" id="VSP_006749" description="In isoform 1." evidence="7">
    <location>
        <position position="630"/>
    </location>
</feature>
<feature type="sequence variant" description="In strain: Wistar.">
    <original>RPT</original>
    <variation>NPP</variation>
    <location>
        <begin position="440"/>
        <end position="442"/>
    </location>
</feature>
<feature type="sequence variant" description="In strain: Lewis.">
    <original>A</original>
    <variation>T</variation>
    <location>
        <position position="457"/>
    </location>
</feature>
<feature type="sequence variant" description="In strain: Lewis.">
    <original>M</original>
    <variation>I</variation>
    <location>
        <position position="555"/>
    </location>
</feature>
<feature type="sequence variant" description="In strain: Wistar.">
    <original>E</original>
    <variation>G</variation>
    <location>
        <position position="568"/>
    </location>
</feature>
<feature type="sequence variant" description="In strain: Lewis.">
    <original>T</original>
    <variation>I</variation>
    <location>
        <position position="583"/>
    </location>
</feature>
<feature type="sequence variant" description="In strain: Lewis.">
    <original>F</original>
    <variation>V</variation>
    <location>
        <position position="592"/>
    </location>
</feature>
<feature type="sequence variant" description="In strain: Lewis.">
    <original>N</original>
    <variation>K</variation>
    <location>
        <position position="624"/>
    </location>
</feature>
<feature type="sequence variant" description="In strain: Lewis.">
    <original>N</original>
    <variation>H</variation>
    <location>
        <position position="640"/>
    </location>
</feature>
<feature type="sequence variant" description="In strain: Lewis.">
    <original>V</original>
    <variation>I</variation>
    <location>
        <position position="774"/>
    </location>
</feature>
<feature type="sequence variant" description="In strain: Lewis.">
    <original>N</original>
    <variation>I</variation>
    <location>
        <position position="806"/>
    </location>
</feature>
<feature type="sequence variant" description="In strain: Lewis.">
    <original>T</original>
    <variation>I</variation>
    <location>
        <position position="850"/>
    </location>
</feature>
<feature type="sequence variant" description="In strain: Lewis.">
    <original>H</original>
    <variation>Q</variation>
    <location>
        <position position="898"/>
    </location>
</feature>
<protein>
    <recommendedName>
        <fullName>Ectonucleotide pyrophosphatase/phosphodiesterase family member 1</fullName>
        <shortName>E-NPP 1</shortName>
    </recommendedName>
    <alternativeName>
        <fullName>Alkaline phosphodiesterase I</fullName>
        <ecNumber evidence="1">3.1.4.1</ecNumber>
    </alternativeName>
    <alternativeName>
        <fullName evidence="8">Nucleotide diphosphatase</fullName>
    </alternativeName>
    <alternativeName>
        <fullName>Nucleotide pyrophosphatase</fullName>
        <shortName>NPPase</shortName>
        <ecNumber evidence="1">3.6.1.9</ecNumber>
    </alternativeName>
    <alternativeName>
        <fullName>Phosphodiesterase I/nucleotide pyrophosphatase 1</fullName>
    </alternativeName>
    <alternativeName>
        <fullName>Plasma-cell membrane glycoprotein PC-1</fullName>
    </alternativeName>
    <component>
        <recommendedName>
            <fullName evidence="8">Ectonucleotide pyrophosphatase/phosphodiesterase family member 1, secreted form</fullName>
        </recommendedName>
    </component>
</protein>
<evidence type="ECO:0000250" key="1">
    <source>
        <dbReference type="UniProtKB" id="P06802"/>
    </source>
</evidence>
<evidence type="ECO:0000250" key="2">
    <source>
        <dbReference type="UniProtKB" id="P22413"/>
    </source>
</evidence>
<evidence type="ECO:0000250" key="3">
    <source>
        <dbReference type="UniProtKB" id="Q9R1E6"/>
    </source>
</evidence>
<evidence type="ECO:0000255" key="4"/>
<evidence type="ECO:0000255" key="5">
    <source>
        <dbReference type="PROSITE-ProRule" id="PRU00350"/>
    </source>
</evidence>
<evidence type="ECO:0000256" key="6">
    <source>
        <dbReference type="SAM" id="MobiDB-lite"/>
    </source>
</evidence>
<evidence type="ECO:0000303" key="7">
    <source>
    </source>
</evidence>
<evidence type="ECO:0000305" key="8"/>
<evidence type="ECO:0000312" key="9">
    <source>
        <dbReference type="RGD" id="628825"/>
    </source>
</evidence>
<evidence type="ECO:0007744" key="10">
    <source>
    </source>
</evidence>
<reference key="1">
    <citation type="journal article" date="2002" name="Eur. J. Immunogenet.">
        <title>Structural basis of allotypes of ecto-nucleotide pyrophosphatase/phosphodiesterase (plasma cell membrane glycoprotein PC-1) in the mouse and rat, and analysis of allele-specific xenogeneic antibodies.</title>
        <authorList>
            <person name="Banakh I."/>
            <person name="Sali A."/>
            <person name="Dubljevic V."/>
            <person name="Grobben B."/>
            <person name="Slegers H."/>
            <person name="Goding J.W."/>
        </authorList>
    </citation>
    <scope>NUCLEOTIDE SEQUENCE [MRNA] (ISOFORMS 1 AND 2)</scope>
    <scope>VARIANTS</scope>
    <source>
        <strain>Lewis</strain>
        <strain>Louvain</strain>
        <strain>Wistar</strain>
    </source>
</reference>
<reference key="2">
    <citation type="journal article" date="2006" name="Proc. Natl. Acad. Sci. U.S.A.">
        <title>Quantitative phosphoproteomics of vasopressin-sensitive renal cells: regulation of aquaporin-2 phosphorylation at two sites.</title>
        <authorList>
            <person name="Hoffert J.D."/>
            <person name="Pisitkun T."/>
            <person name="Wang G."/>
            <person name="Shen R.-F."/>
            <person name="Knepper M.A."/>
        </authorList>
    </citation>
    <scope>IDENTIFICATION BY MASS SPECTROMETRY [LARGE SCALE ANALYSIS]</scope>
</reference>
<reference key="3">
    <citation type="journal article" date="2012" name="Nat. Commun.">
        <title>Quantitative maps of protein phosphorylation sites across 14 different rat organs and tissues.</title>
        <authorList>
            <person name="Lundby A."/>
            <person name="Secher A."/>
            <person name="Lage K."/>
            <person name="Nordsborg N.B."/>
            <person name="Dmytriyev A."/>
            <person name="Lundby C."/>
            <person name="Olsen J.V."/>
        </authorList>
    </citation>
    <scope>PHOSPHORYLATION [LARGE SCALE ANALYSIS] AT SER-25 AND THR-238</scope>
    <scope>IDENTIFICATION BY MASS SPECTROMETRY [LARGE SCALE ANALYSIS]</scope>
</reference>
<accession>Q924C3</accession>
<accession>Q91XQ3</accession>
<accession>Q920C8</accession>
<proteinExistence type="evidence at protein level"/>
<gene>
    <name evidence="9" type="primary">Enpp1</name>
    <name type="synonym">Npps</name>
    <name type="synonym">Pc1</name>
    <name type="synonym">Pdnp1</name>
</gene>
<organism>
    <name type="scientific">Rattus norvegicus</name>
    <name type="common">Rat</name>
    <dbReference type="NCBI Taxonomy" id="10116"/>
    <lineage>
        <taxon>Eukaryota</taxon>
        <taxon>Metazoa</taxon>
        <taxon>Chordata</taxon>
        <taxon>Craniata</taxon>
        <taxon>Vertebrata</taxon>
        <taxon>Euteleostomi</taxon>
        <taxon>Mammalia</taxon>
        <taxon>Eutheria</taxon>
        <taxon>Euarchontoglires</taxon>
        <taxon>Glires</taxon>
        <taxon>Rodentia</taxon>
        <taxon>Myomorpha</taxon>
        <taxon>Muroidea</taxon>
        <taxon>Muridae</taxon>
        <taxon>Murinae</taxon>
        <taxon>Rattus</taxon>
    </lineage>
</organism>
<keyword id="KW-0025">Alternative splicing</keyword>
<keyword id="KW-0091">Biomineralization</keyword>
<keyword id="KW-0106">Calcium</keyword>
<keyword id="KW-1003">Cell membrane</keyword>
<keyword id="KW-1015">Disulfide bond</keyword>
<keyword id="KW-0325">Glycoprotein</keyword>
<keyword id="KW-0378">Hydrolase</keyword>
<keyword id="KW-0472">Membrane</keyword>
<keyword id="KW-0479">Metal-binding</keyword>
<keyword id="KW-0597">Phosphoprotein</keyword>
<keyword id="KW-1185">Reference proteome</keyword>
<keyword id="KW-0677">Repeat</keyword>
<keyword id="KW-0964">Secreted</keyword>
<keyword id="KW-0735">Signal-anchor</keyword>
<keyword id="KW-0812">Transmembrane</keyword>
<keyword id="KW-1133">Transmembrane helix</keyword>
<keyword id="KW-0862">Zinc</keyword>